<dbReference type="EC" id="3.5.3.17" evidence="2"/>
<dbReference type="EMBL" id="AE004091">
    <property type="protein sequence ID" value="AAG03677.1"/>
    <property type="molecule type" value="Genomic_DNA"/>
</dbReference>
<dbReference type="PIR" id="H83610">
    <property type="entry name" value="H83610"/>
</dbReference>
<dbReference type="RefSeq" id="NP_248979.1">
    <property type="nucleotide sequence ID" value="NC_002516.2"/>
</dbReference>
<dbReference type="RefSeq" id="WP_003112934.1">
    <property type="nucleotide sequence ID" value="NC_002516.2"/>
</dbReference>
<dbReference type="PDB" id="3NIP">
    <property type="method" value="X-ray"/>
    <property type="resolution" value="2.50 A"/>
    <property type="chains" value="A/B/C/D/E/F=1-318"/>
</dbReference>
<dbReference type="PDB" id="3NIQ">
    <property type="method" value="X-ray"/>
    <property type="resolution" value="2.07 A"/>
    <property type="chains" value="A/B=1-318"/>
</dbReference>
<dbReference type="PDBsum" id="3NIP"/>
<dbReference type="PDBsum" id="3NIQ"/>
<dbReference type="SMR" id="Q9I6K2"/>
<dbReference type="FunCoup" id="Q9I6K2">
    <property type="interactions" value="577"/>
</dbReference>
<dbReference type="STRING" id="208964.PA0288"/>
<dbReference type="PaxDb" id="208964-PA0288"/>
<dbReference type="GeneID" id="880781"/>
<dbReference type="KEGG" id="pae:PA0288"/>
<dbReference type="PATRIC" id="fig|208964.12.peg.302"/>
<dbReference type="PseudoCAP" id="PA0288"/>
<dbReference type="HOGENOM" id="CLU_039478_0_0_6"/>
<dbReference type="InParanoid" id="Q9I6K2"/>
<dbReference type="OrthoDB" id="9789727at2"/>
<dbReference type="PhylomeDB" id="Q9I6K2"/>
<dbReference type="BioCyc" id="PAER208964:G1FZ6-290-MONOMER"/>
<dbReference type="BRENDA" id="3.5.3.17">
    <property type="organism ID" value="5087"/>
</dbReference>
<dbReference type="EvolutionaryTrace" id="Q9I6K2"/>
<dbReference type="Proteomes" id="UP000002438">
    <property type="component" value="Chromosome"/>
</dbReference>
<dbReference type="GO" id="GO:0008783">
    <property type="term" value="F:agmatinase activity"/>
    <property type="evidence" value="ECO:0000318"/>
    <property type="project" value="GO_Central"/>
</dbReference>
<dbReference type="GO" id="GO:0047972">
    <property type="term" value="F:guanidinopropionase activity"/>
    <property type="evidence" value="ECO:0007669"/>
    <property type="project" value="UniProtKB-EC"/>
</dbReference>
<dbReference type="GO" id="GO:0046872">
    <property type="term" value="F:metal ion binding"/>
    <property type="evidence" value="ECO:0007669"/>
    <property type="project" value="UniProtKB-KW"/>
</dbReference>
<dbReference type="GO" id="GO:0033389">
    <property type="term" value="P:putrescine biosynthetic process from arginine, via agmatine"/>
    <property type="evidence" value="ECO:0000318"/>
    <property type="project" value="GO_Central"/>
</dbReference>
<dbReference type="CDD" id="cd11592">
    <property type="entry name" value="Agmatinase_PAH"/>
    <property type="match status" value="1"/>
</dbReference>
<dbReference type="Gene3D" id="3.40.800.10">
    <property type="entry name" value="Ureohydrolase domain"/>
    <property type="match status" value="1"/>
</dbReference>
<dbReference type="InterPro" id="IPR005925">
    <property type="entry name" value="Agmatinase-rel"/>
</dbReference>
<dbReference type="InterPro" id="IPR006035">
    <property type="entry name" value="Ureohydrolase"/>
</dbReference>
<dbReference type="InterPro" id="IPR023696">
    <property type="entry name" value="Ureohydrolase_dom_sf"/>
</dbReference>
<dbReference type="InterPro" id="IPR020855">
    <property type="entry name" value="Ureohydrolase_Mn_BS"/>
</dbReference>
<dbReference type="NCBIfam" id="TIGR01230">
    <property type="entry name" value="agmatinase"/>
    <property type="match status" value="1"/>
</dbReference>
<dbReference type="PANTHER" id="PTHR11358">
    <property type="entry name" value="ARGINASE/AGMATINASE"/>
    <property type="match status" value="1"/>
</dbReference>
<dbReference type="PANTHER" id="PTHR11358:SF26">
    <property type="entry name" value="GUANIDINO ACID HYDROLASE, MITOCHONDRIAL"/>
    <property type="match status" value="1"/>
</dbReference>
<dbReference type="Pfam" id="PF00491">
    <property type="entry name" value="Arginase"/>
    <property type="match status" value="1"/>
</dbReference>
<dbReference type="PIRSF" id="PIRSF036979">
    <property type="entry name" value="Arginase"/>
    <property type="match status" value="1"/>
</dbReference>
<dbReference type="PRINTS" id="PR00116">
    <property type="entry name" value="ARGINASE"/>
</dbReference>
<dbReference type="SUPFAM" id="SSF52768">
    <property type="entry name" value="Arginase/deacetylase"/>
    <property type="match status" value="1"/>
</dbReference>
<dbReference type="PROSITE" id="PS01053">
    <property type="entry name" value="ARGINASE_1"/>
    <property type="match status" value="1"/>
</dbReference>
<dbReference type="PROSITE" id="PS51409">
    <property type="entry name" value="ARGINASE_2"/>
    <property type="match status" value="1"/>
</dbReference>
<organism>
    <name type="scientific">Pseudomonas aeruginosa (strain ATCC 15692 / DSM 22644 / CIP 104116 / JCM 14847 / LMG 12228 / 1C / PRS 101 / PAO1)</name>
    <dbReference type="NCBI Taxonomy" id="208964"/>
    <lineage>
        <taxon>Bacteria</taxon>
        <taxon>Pseudomonadati</taxon>
        <taxon>Pseudomonadota</taxon>
        <taxon>Gammaproteobacteria</taxon>
        <taxon>Pseudomonadales</taxon>
        <taxon>Pseudomonadaceae</taxon>
        <taxon>Pseudomonas</taxon>
    </lineage>
</organism>
<proteinExistence type="evidence at protein level"/>
<gene>
    <name type="primary">gpuA</name>
    <name type="ordered locus">PA0288</name>
</gene>
<keyword id="KW-0002">3D-structure</keyword>
<keyword id="KW-0378">Hydrolase</keyword>
<keyword id="KW-0464">Manganese</keyword>
<keyword id="KW-0479">Metal-binding</keyword>
<keyword id="KW-1185">Reference proteome</keyword>
<feature type="chain" id="PRO_0000429142" description="Guanidinopropionase">
    <location>
        <begin position="1"/>
        <end position="318"/>
    </location>
</feature>
<feature type="binding site" evidence="1 2">
    <location>
        <position position="126"/>
    </location>
    <ligand>
        <name>Mn(2+)</name>
        <dbReference type="ChEBI" id="CHEBI:29035"/>
        <label>1</label>
    </ligand>
</feature>
<feature type="binding site" evidence="1 2">
    <location>
        <position position="148"/>
    </location>
    <ligand>
        <name>Mn(2+)</name>
        <dbReference type="ChEBI" id="CHEBI:29035"/>
        <label>1</label>
    </ligand>
</feature>
<feature type="binding site" evidence="1 2">
    <location>
        <position position="150"/>
    </location>
    <ligand>
        <name>Mn(2+)</name>
        <dbReference type="ChEBI" id="CHEBI:29035"/>
        <label>2</label>
    </ligand>
</feature>
<feature type="binding site" evidence="1 2">
    <location>
        <position position="152"/>
    </location>
    <ligand>
        <name>Mn(2+)</name>
        <dbReference type="ChEBI" id="CHEBI:29035"/>
        <label>1</label>
    </ligand>
</feature>
<feature type="binding site" evidence="1 2">
    <location>
        <position position="240"/>
    </location>
    <ligand>
        <name>Mn(2+)</name>
        <dbReference type="ChEBI" id="CHEBI:29035"/>
        <label>2</label>
    </ligand>
</feature>
<feature type="binding site" evidence="1 2">
    <location>
        <position position="242"/>
    </location>
    <ligand>
        <name>Mn(2+)</name>
        <dbReference type="ChEBI" id="CHEBI:29035"/>
        <label>2</label>
    </ligand>
</feature>
<feature type="mutagenesis site" description="Reduces substrate affinity 10-fold and catalytic efficiency 3-fold." evidence="2">
    <original>Y</original>
    <variation>M</variation>
    <location>
        <position position="157"/>
    </location>
</feature>
<feature type="turn" evidence="4">
    <location>
        <begin position="11"/>
        <end position="13"/>
    </location>
</feature>
<feature type="helix" evidence="4">
    <location>
        <begin position="23"/>
        <end position="25"/>
    </location>
</feature>
<feature type="helix" evidence="4">
    <location>
        <begin position="32"/>
        <end position="34"/>
    </location>
</feature>
<feature type="strand" evidence="4">
    <location>
        <begin position="36"/>
        <end position="42"/>
    </location>
</feature>
<feature type="strand" evidence="3">
    <location>
        <begin position="49"/>
        <end position="51"/>
    </location>
</feature>
<feature type="helix" evidence="4">
    <location>
        <begin position="54"/>
        <end position="56"/>
    </location>
</feature>
<feature type="helix" evidence="4">
    <location>
        <begin position="57"/>
        <end position="64"/>
    </location>
</feature>
<feature type="helix" evidence="4">
    <location>
        <begin position="65"/>
        <end position="67"/>
    </location>
</feature>
<feature type="turn" evidence="4">
    <location>
        <begin position="73"/>
        <end position="75"/>
    </location>
</feature>
<feature type="helix" evidence="4">
    <location>
        <begin position="79"/>
        <end position="82"/>
    </location>
</feature>
<feature type="strand" evidence="4">
    <location>
        <begin position="85"/>
        <end position="90"/>
    </location>
</feature>
<feature type="helix" evidence="4">
    <location>
        <begin position="98"/>
        <end position="114"/>
    </location>
</feature>
<feature type="strand" evidence="4">
    <location>
        <begin position="118"/>
        <end position="125"/>
    </location>
</feature>
<feature type="helix" evidence="4">
    <location>
        <begin position="126"/>
        <end position="128"/>
    </location>
</feature>
<feature type="helix" evidence="4">
    <location>
        <begin position="129"/>
        <end position="136"/>
    </location>
</feature>
<feature type="strand" evidence="4">
    <location>
        <begin position="138"/>
        <end position="140"/>
    </location>
</feature>
<feature type="strand" evidence="4">
    <location>
        <begin position="142"/>
        <end position="147"/>
    </location>
</feature>
<feature type="turn" evidence="4">
    <location>
        <begin position="158"/>
        <end position="160"/>
    </location>
</feature>
<feature type="helix" evidence="4">
    <location>
        <begin position="168"/>
        <end position="174"/>
    </location>
</feature>
<feature type="strand" evidence="4">
    <location>
        <begin position="178"/>
        <end position="188"/>
    </location>
</feature>
<feature type="strand" evidence="3">
    <location>
        <begin position="192"/>
        <end position="195"/>
    </location>
</feature>
<feature type="helix" evidence="4">
    <location>
        <begin position="199"/>
        <end position="204"/>
    </location>
</feature>
<feature type="strand" evidence="4">
    <location>
        <begin position="207"/>
        <end position="210"/>
    </location>
</feature>
<feature type="helix" evidence="4">
    <location>
        <begin position="211"/>
        <end position="230"/>
    </location>
</feature>
<feature type="strand" evidence="4">
    <location>
        <begin position="235"/>
        <end position="240"/>
    </location>
</feature>
<feature type="helix" evidence="4">
    <location>
        <begin position="241"/>
        <end position="243"/>
    </location>
</feature>
<feature type="turn" evidence="4">
    <location>
        <begin position="246"/>
        <end position="248"/>
    </location>
</feature>
<feature type="helix" evidence="4">
    <location>
        <begin position="262"/>
        <end position="270"/>
    </location>
</feature>
<feature type="turn" evidence="4">
    <location>
        <begin position="271"/>
        <end position="274"/>
    </location>
</feature>
<feature type="strand" evidence="4">
    <location>
        <begin position="277"/>
        <end position="283"/>
    </location>
</feature>
<feature type="helix" evidence="4">
    <location>
        <begin position="287"/>
        <end position="289"/>
    </location>
</feature>
<feature type="helix" evidence="4">
    <location>
        <begin position="294"/>
        <end position="317"/>
    </location>
</feature>
<comment type="function">
    <text evidence="2">Catalyzes the hydrolysis of 3-guanidinopropanoate to beta-alanine and urea. Possesses low activity against 4-guanidinobutanoate. Has no activity against arginine and agmatine.</text>
</comment>
<comment type="catalytic activity">
    <reaction evidence="2">
        <text>3-guanidinopropanoate + H2O = urea + beta-alanine</text>
        <dbReference type="Rhea" id="RHEA:16029"/>
        <dbReference type="ChEBI" id="CHEBI:15377"/>
        <dbReference type="ChEBI" id="CHEBI:16199"/>
        <dbReference type="ChEBI" id="CHEBI:57593"/>
        <dbReference type="ChEBI" id="CHEBI:57966"/>
        <dbReference type="EC" id="3.5.3.17"/>
    </reaction>
</comment>
<comment type="cofactor">
    <cofactor evidence="1 2">
        <name>Mn(2+)</name>
        <dbReference type="ChEBI" id="CHEBI:29035"/>
    </cofactor>
    <text evidence="1 2">Binds 2 manganese ions per subunit.</text>
</comment>
<comment type="biophysicochemical properties">
    <kinetics>
        <KM evidence="2">12.8 mM for 3-guanidinopropanoate</KM>
        <KM evidence="2">37.3 mM for 4-guanidinobutanoate</KM>
        <text>kcat is 106 sec(-1) with 3-guanidinopropanoate as substrate. kcat is 57.6 sec(-1) for 4-guanidinobutanoate as substrate.</text>
    </kinetics>
</comment>
<comment type="subunit">
    <text evidence="2">Homohexamer.</text>
</comment>
<comment type="similarity">
    <text evidence="1">Belongs to the arginase family. Agmatinase subfamily.</text>
</comment>
<name>GPUA_PSEAE</name>
<accession>Q9I6K2</accession>
<protein>
    <recommendedName>
        <fullName>Guanidinopropionase</fullName>
        <ecNumber evidence="2">3.5.3.17</ecNumber>
    </recommendedName>
</protein>
<sequence length="318" mass="34189">MSNDHPQPLDAAEIPRFAGIPTFMRLPAFTDPAALQVGLIGVPWDGGTTNRAGARHGPREVRNLSSLMRKVHHVSRIAPYDLVRVGDLGDAPVNPIDLLDSLRRIEGFYRQVHAAGTLPLSVGGDHLVTLPIFRALGRERPLGMVHFDAHSDTNDRYFGDNPYTHGTPFRRAIEEGLLDPLRTVQIGIRGSVYSPDDDAFARECGIRVIHMEEFVELGVEATLAEARRVVGAGPTYVSFDVDVLDPAFAPGTGTPEIGGMTSLQAQQLVRGLRGLDLVGADVVEVSPPFDVGGATALVGATMMFELLCLLAESAARSA</sequence>
<evidence type="ECO:0000255" key="1">
    <source>
        <dbReference type="PROSITE-ProRule" id="PRU00742"/>
    </source>
</evidence>
<evidence type="ECO:0000269" key="2">
    <source>
    </source>
</evidence>
<evidence type="ECO:0007829" key="3">
    <source>
        <dbReference type="PDB" id="3NIP"/>
    </source>
</evidence>
<evidence type="ECO:0007829" key="4">
    <source>
        <dbReference type="PDB" id="3NIQ"/>
    </source>
</evidence>
<reference key="1">
    <citation type="journal article" date="2000" name="Nature">
        <title>Complete genome sequence of Pseudomonas aeruginosa PAO1, an opportunistic pathogen.</title>
        <authorList>
            <person name="Stover C.K."/>
            <person name="Pham X.-Q.T."/>
            <person name="Erwin A.L."/>
            <person name="Mizoguchi S.D."/>
            <person name="Warrener P."/>
            <person name="Hickey M.J."/>
            <person name="Brinkman F.S.L."/>
            <person name="Hufnagle W.O."/>
            <person name="Kowalik D.J."/>
            <person name="Lagrou M."/>
            <person name="Garber R.L."/>
            <person name="Goltry L."/>
            <person name="Tolentino E."/>
            <person name="Westbrock-Wadman S."/>
            <person name="Yuan Y."/>
            <person name="Brody L.L."/>
            <person name="Coulter S.N."/>
            <person name="Folger K.R."/>
            <person name="Kas A."/>
            <person name="Larbig K."/>
            <person name="Lim R.M."/>
            <person name="Smith K.A."/>
            <person name="Spencer D.H."/>
            <person name="Wong G.K.-S."/>
            <person name="Wu Z."/>
            <person name="Paulsen I.T."/>
            <person name="Reizer J."/>
            <person name="Saier M.H. Jr."/>
            <person name="Hancock R.E.W."/>
            <person name="Lory S."/>
            <person name="Olson M.V."/>
        </authorList>
    </citation>
    <scope>NUCLEOTIDE SEQUENCE [LARGE SCALE GENOMIC DNA]</scope>
    <source>
        <strain>ATCC 15692 / DSM 22644 / CIP 104116 / JCM 14847 / LMG 12228 / 1C / PRS 101 / PAO1</strain>
    </source>
</reference>
<reference key="2">
    <citation type="journal article" date="2011" name="J. Struct. Biol.">
        <title>Crystal structures of Pseudomonas aeruginosa guanidinobutyrase and guanidinopropionase, members of the ureohydrolase superfamily.</title>
        <authorList>
            <person name="Lee S.J."/>
            <person name="Kim D.J."/>
            <person name="Kim H.S."/>
            <person name="Lee B.I."/>
            <person name="Yoon H.J."/>
            <person name="Yoon J.Y."/>
            <person name="Kim K.H."/>
            <person name="Jang J.Y."/>
            <person name="Im H.N."/>
            <person name="An D.R."/>
            <person name="Song J.S."/>
            <person name="Kim H.J."/>
            <person name="Suh S.W."/>
        </authorList>
    </citation>
    <scope>X-RAY CRYSTALLOGRAPHY (2.07 ANGSTROMS) IN COMPLEX WITH MANGANESE</scope>
    <scope>FUNCTION</scope>
    <scope>CATALYTIC ACTIVITY</scope>
    <scope>COFACTOR</scope>
    <scope>BIOPHYSICOCHEMICAL PROPERTIES</scope>
    <scope>SUBUNIT</scope>
    <scope>MUTAGENESIS OF TYR-157</scope>
    <source>
        <strain>ATCC 15692 / DSM 22644 / CIP 104116 / JCM 14847 / LMG 12228 / 1C / PRS 101 / PAO1</strain>
    </source>
</reference>